<organism>
    <name type="scientific">Oryza sativa subsp. japonica</name>
    <name type="common">Rice</name>
    <dbReference type="NCBI Taxonomy" id="39947"/>
    <lineage>
        <taxon>Eukaryota</taxon>
        <taxon>Viridiplantae</taxon>
        <taxon>Streptophyta</taxon>
        <taxon>Embryophyta</taxon>
        <taxon>Tracheophyta</taxon>
        <taxon>Spermatophyta</taxon>
        <taxon>Magnoliopsida</taxon>
        <taxon>Liliopsida</taxon>
        <taxon>Poales</taxon>
        <taxon>Poaceae</taxon>
        <taxon>BOP clade</taxon>
        <taxon>Oryzoideae</taxon>
        <taxon>Oryzeae</taxon>
        <taxon>Oryzinae</taxon>
        <taxon>Oryza</taxon>
        <taxon>Oryza sativa</taxon>
    </lineage>
</organism>
<reference key="1">
    <citation type="journal article" date="2005" name="Nature">
        <title>The map-based sequence of the rice genome.</title>
        <authorList>
            <consortium name="International rice genome sequencing project (IRGSP)"/>
        </authorList>
    </citation>
    <scope>NUCLEOTIDE SEQUENCE [LARGE SCALE GENOMIC DNA]</scope>
    <source>
        <strain>cv. Nipponbare</strain>
    </source>
</reference>
<reference key="2">
    <citation type="journal article" date="2008" name="Nucleic Acids Res.">
        <title>The rice annotation project database (RAP-DB): 2008 update.</title>
        <authorList>
            <consortium name="The rice annotation project (RAP)"/>
        </authorList>
    </citation>
    <scope>GENOME REANNOTATION</scope>
    <source>
        <strain>cv. Nipponbare</strain>
    </source>
</reference>
<reference key="3">
    <citation type="journal article" date="2013" name="Rice">
        <title>Improvement of the Oryza sativa Nipponbare reference genome using next generation sequence and optical map data.</title>
        <authorList>
            <person name="Kawahara Y."/>
            <person name="de la Bastide M."/>
            <person name="Hamilton J.P."/>
            <person name="Kanamori H."/>
            <person name="McCombie W.R."/>
            <person name="Ouyang S."/>
            <person name="Schwartz D.C."/>
            <person name="Tanaka T."/>
            <person name="Wu J."/>
            <person name="Zhou S."/>
            <person name="Childs K.L."/>
            <person name="Davidson R.M."/>
            <person name="Lin H."/>
            <person name="Quesada-Ocampo L."/>
            <person name="Vaillancourt B."/>
            <person name="Sakai H."/>
            <person name="Lee S.S."/>
            <person name="Kim J."/>
            <person name="Numa H."/>
            <person name="Itoh T."/>
            <person name="Buell C.R."/>
            <person name="Matsumoto T."/>
        </authorList>
    </citation>
    <scope>GENOME REANNOTATION</scope>
    <source>
        <strain>cv. Nipponbare</strain>
    </source>
</reference>
<reference key="4">
    <citation type="journal article" date="2003" name="Science">
        <title>Collection, mapping, and annotation of over 28,000 cDNA clones from japonica rice.</title>
        <authorList>
            <consortium name="The rice full-length cDNA consortium"/>
        </authorList>
    </citation>
    <scope>NUCLEOTIDE SEQUENCE [LARGE SCALE MRNA] (ISOFORMS 1 AND 2)</scope>
    <source>
        <strain>cv. Nipponbare</strain>
    </source>
</reference>
<reference key="5">
    <citation type="journal article" date="2013" name="PLoS ONE">
        <title>Genome-wide identification, phylogenetic and co-expression analysis of OsSET gene family in rice.</title>
        <authorList>
            <person name="Lu Z."/>
            <person name="Huang X."/>
            <person name="Ouyang Y."/>
            <person name="Yao J."/>
        </authorList>
    </citation>
    <scope>GENE FAMILY</scope>
    <scope>NOMENCLATURE</scope>
</reference>
<reference key="6">
    <citation type="journal article" date="2014" name="Plant Physiol.">
        <title>Trithorax group protein Oryza sativa Trithorax1 controls flowering time in rice via interaction with early heading date3.</title>
        <authorList>
            <person name="Choi S.C."/>
            <person name="Lee S."/>
            <person name="Kim S.R."/>
            <person name="Lee Y.S."/>
            <person name="Liu C."/>
            <person name="Cao X."/>
            <person name="An G."/>
        </authorList>
    </citation>
    <scope>FUNCTION</scope>
    <scope>CATALYTIC ACTIVITY</scope>
    <scope>INTERACTION WITH EHD3</scope>
    <scope>SUBCELLULAR LOCATION</scope>
    <scope>TISSUE SPECIFICITY</scope>
    <scope>DISRUPTION PHENOTYPE</scope>
</reference>
<protein>
    <recommendedName>
        <fullName evidence="14">Histone-lysine N-methyltransferase TRX1</fullName>
        <shortName evidence="13">OsTrx1</shortName>
        <ecNumber evidence="11">2.1.1.364</ecNumber>
    </recommendedName>
    <alternativeName>
        <fullName evidence="14">Protein SET DOMAIN GROUP 723</fullName>
    </alternativeName>
    <alternativeName>
        <fullName evidence="14">SET family protein 33</fullName>
        <shortName evidence="12">OsSET33</shortName>
    </alternativeName>
</protein>
<evidence type="ECO:0000250" key="1">
    <source>
        <dbReference type="UniProtKB" id="Q9C5X4"/>
    </source>
</evidence>
<evidence type="ECO:0000255" key="2">
    <source>
        <dbReference type="PROSITE-ProRule" id="PRU00146"/>
    </source>
</evidence>
<evidence type="ECO:0000255" key="3">
    <source>
        <dbReference type="PROSITE-ProRule" id="PRU00155"/>
    </source>
</evidence>
<evidence type="ECO:0000255" key="4">
    <source>
        <dbReference type="PROSITE-ProRule" id="PRU00162"/>
    </source>
</evidence>
<evidence type="ECO:0000255" key="5">
    <source>
        <dbReference type="PROSITE-ProRule" id="PRU00190"/>
    </source>
</evidence>
<evidence type="ECO:0000255" key="6">
    <source>
        <dbReference type="PROSITE-ProRule" id="PRU00226"/>
    </source>
</evidence>
<evidence type="ECO:0000255" key="7">
    <source>
        <dbReference type="PROSITE-ProRule" id="PRU00875"/>
    </source>
</evidence>
<evidence type="ECO:0000255" key="8">
    <source>
        <dbReference type="PROSITE-ProRule" id="PRU00876"/>
    </source>
</evidence>
<evidence type="ECO:0000255" key="9">
    <source>
        <dbReference type="PROSITE-ProRule" id="PRU01146"/>
    </source>
</evidence>
<evidence type="ECO:0000256" key="10">
    <source>
        <dbReference type="SAM" id="MobiDB-lite"/>
    </source>
</evidence>
<evidence type="ECO:0000269" key="11">
    <source>
    </source>
</evidence>
<evidence type="ECO:0000303" key="12">
    <source>
    </source>
</evidence>
<evidence type="ECO:0000303" key="13">
    <source>
    </source>
</evidence>
<evidence type="ECO:0000305" key="14"/>
<evidence type="ECO:0000312" key="15">
    <source>
        <dbReference type="EMBL" id="BAD22318.1"/>
    </source>
</evidence>
<evidence type="ECO:0000312" key="16">
    <source>
        <dbReference type="EMBL" id="BAD22319.1"/>
    </source>
</evidence>
<evidence type="ECO:0000312" key="17">
    <source>
        <dbReference type="EMBL" id="BAF24549.1"/>
    </source>
</evidence>
<keyword id="KW-0025">Alternative splicing</keyword>
<keyword id="KW-0156">Chromatin regulator</keyword>
<keyword id="KW-0287">Flowering</keyword>
<keyword id="KW-0479">Metal-binding</keyword>
<keyword id="KW-0489">Methyltransferase</keyword>
<keyword id="KW-0539">Nucleus</keyword>
<keyword id="KW-1185">Reference proteome</keyword>
<keyword id="KW-0949">S-adenosyl-L-methionine</keyword>
<keyword id="KW-0808">Transferase</keyword>
<keyword id="KW-0862">Zinc</keyword>
<keyword id="KW-0863">Zinc-finger</keyword>
<accession>Q6K431</accession>
<accession>Q6K430</accession>
<gene>
    <name evidence="13" type="primary">TRX1</name>
    <name evidence="14" type="synonym">SDG723</name>
    <name evidence="12" type="synonym">SET</name>
    <name evidence="17" type="ordered locus">Os09g0134500</name>
    <name evidence="14" type="ordered locus">LOC_Os09g04890</name>
    <name evidence="15" type="ORF">P0406E03.49-1</name>
    <name evidence="16" type="ORF">P0406E03.49-2</name>
</gene>
<sequence length="1022" mass="115660">MVIAVEGGFVHEEEEVDHPIRYLPLGRVYSSSAPCPLPKKPRSAEDGKPPVIVYYRRRRKKPRVEGPPPSPATAPPMLHPREDDEDEEVTRRKGSLKYELLSLGQAPPALGGDGEEPARRRCLRRSGGAERRGYFSEPKRRQRQGVHKEAASSAGRRWLELEIEAADPLAFVGLGCKVFWPLDEDWYKGSITGYNEATKKHSVKYDDGESEDLNLADERIKFSISSEEMKCRNLKFGISNLNKRGYDELLALAVSLHDYQGLDPGDLVWAKLTGHAMWPAVVVDESNVPANRALKPGRLDQSILVQFFGTHDFARIKLKQAVPFLNGLLSSLHLKCKQARFYRSLEEAKEFLCTQLLPENMLQLQKSMEKGSSDANSNKDVHSCDNLSEDKTAESGGDYDEMTPIELGNLRVSKLGRIVTDSDYFHNKKHIWPEGYTAFRKFRSVKDPHVVILYKMEVLRNSDIKARPLFRVTSEDGTQIDGSTPNTCWKEIYCRLKEKQRNVASGLDRDVCQGSGSYMFGFSNPQIRQLIQELPNARSCLKYFENAGDTFRGYRAVHVNWKDLDYCSVCDMDEEYEDNLFLQCDKCRMMVHARCYGELEPLNGVLWLCNLCRPEAPRVSPRCCLCPVTGGAMKPTTDGRWAHLACAIWIPETCLKDVKRMEPIDGLSRINKDRWKLLCSICGVAYGACIQCSHPTCRVAYHPLCARAADLCVELEDDDKIHLMLLDEDEDPCIRLLSYCKKHRQPSTERPSLESNLAKPAVVVQTDAVPPSGCARTEPYNIHGRRGQKQPQVMATASVKRLYVENMPYIVSGFCQNRVGHDAISEPIQSVGFLDVAHQEAVGNVSSMIEKYKSMKATFRRRLAFGKSRIHGFGVFAKVSHKAGDMMIEYIGELVRPPISDIRERRIYNSLVGAGTYMFRIDDERVIDATRAGSIAHLINHSCEPNCYSRVISVLGDEHIIIFAKRDINPWEELTYDYRFVSSDQRLPCYCGFPKCRGVVNDVEAEGQSAKIRVNRSELFQQ</sequence>
<proteinExistence type="evidence at protein level"/>
<name>TRX1_ORYSJ</name>
<feature type="chain" id="PRO_0000437438" description="Histone-lysine N-methyltransferase TRX1">
    <location>
        <begin position="1"/>
        <end position="1022"/>
    </location>
</feature>
<feature type="domain" description="PWWP" evidence="4">
    <location>
        <begin position="264"/>
        <end position="327"/>
    </location>
</feature>
<feature type="domain" description="FYR N-terminal" evidence="7">
    <location>
        <begin position="402"/>
        <end position="461"/>
    </location>
</feature>
<feature type="domain" description="FYR C-terminal" evidence="8">
    <location>
        <begin position="465"/>
        <end position="548"/>
    </location>
</feature>
<feature type="domain" description="SET" evidence="5">
    <location>
        <begin position="861"/>
        <end position="979"/>
    </location>
</feature>
<feature type="domain" description="Post-SET" evidence="3">
    <location>
        <begin position="985"/>
        <end position="1001"/>
    </location>
</feature>
<feature type="zinc finger region" description="Phorbol-ester/DAG-type" evidence="6">
    <location>
        <begin position="553"/>
        <end position="609"/>
    </location>
</feature>
<feature type="zinc finger region" description="PHD-type" evidence="2">
    <location>
        <begin position="564"/>
        <end position="615"/>
    </location>
</feature>
<feature type="zinc finger region" description="PHD-type" evidence="9">
    <location>
        <begin position="677"/>
        <end position="744"/>
    </location>
</feature>
<feature type="region of interest" description="Disordered" evidence="10">
    <location>
        <begin position="31"/>
        <end position="151"/>
    </location>
</feature>
<feature type="region of interest" description="Disordered" evidence="10">
    <location>
        <begin position="367"/>
        <end position="399"/>
    </location>
</feature>
<feature type="region of interest" description="Extended PHD domain (ePHD)" evidence="9">
    <location>
        <begin position="620"/>
        <end position="744"/>
    </location>
</feature>
<feature type="compositionally biased region" description="Pro residues" evidence="10">
    <location>
        <begin position="65"/>
        <end position="78"/>
    </location>
</feature>
<feature type="compositionally biased region" description="Basic and acidic residues" evidence="10">
    <location>
        <begin position="127"/>
        <end position="139"/>
    </location>
</feature>
<feature type="compositionally biased region" description="Basic and acidic residues" evidence="10">
    <location>
        <begin position="367"/>
        <end position="393"/>
    </location>
</feature>
<feature type="binding site" evidence="5">
    <location>
        <position position="943"/>
    </location>
    <ligand>
        <name>Zn(2+)</name>
        <dbReference type="ChEBI" id="CHEBI:29105"/>
    </ligand>
</feature>
<feature type="binding site" evidence="5">
    <location>
        <position position="978"/>
    </location>
    <ligand>
        <name>S-adenosyl-L-methionine</name>
        <dbReference type="ChEBI" id="CHEBI:59789"/>
    </ligand>
</feature>
<feature type="binding site" evidence="3">
    <location>
        <position position="989"/>
    </location>
    <ligand>
        <name>Zn(2+)</name>
        <dbReference type="ChEBI" id="CHEBI:29105"/>
    </ligand>
</feature>
<feature type="binding site" evidence="3">
    <location>
        <position position="991"/>
    </location>
    <ligand>
        <name>Zn(2+)</name>
        <dbReference type="ChEBI" id="CHEBI:29105"/>
    </ligand>
</feature>
<feature type="binding site" evidence="3">
    <location>
        <position position="996"/>
    </location>
    <ligand>
        <name>Zn(2+)</name>
        <dbReference type="ChEBI" id="CHEBI:29105"/>
    </ligand>
</feature>
<feature type="splice variant" id="VSP_058520" description="In isoform 2.">
    <original>RIHGF</original>
    <variation>INLYQ</variation>
    <location>
        <begin position="869"/>
        <end position="873"/>
    </location>
</feature>
<feature type="splice variant" id="VSP_058521" description="In isoform 2.">
    <location>
        <begin position="874"/>
        <end position="1022"/>
    </location>
</feature>
<dbReference type="EC" id="2.1.1.364" evidence="11"/>
<dbReference type="EMBL" id="AP005583">
    <property type="protein sequence ID" value="BAD22318.1"/>
    <property type="molecule type" value="Genomic_DNA"/>
</dbReference>
<dbReference type="EMBL" id="AP005583">
    <property type="protein sequence ID" value="BAD22319.1"/>
    <property type="molecule type" value="Genomic_DNA"/>
</dbReference>
<dbReference type="EMBL" id="AP008215">
    <property type="protein sequence ID" value="BAF24549.1"/>
    <property type="molecule type" value="Genomic_DNA"/>
</dbReference>
<dbReference type="EMBL" id="AP014965">
    <property type="protein sequence ID" value="BAT06966.1"/>
    <property type="molecule type" value="Genomic_DNA"/>
</dbReference>
<dbReference type="EMBL" id="AP014965">
    <property type="protein sequence ID" value="BAT06967.1"/>
    <property type="molecule type" value="Genomic_DNA"/>
</dbReference>
<dbReference type="EMBL" id="AK065095">
    <property type="status" value="NOT_ANNOTATED_CDS"/>
    <property type="molecule type" value="mRNA"/>
</dbReference>
<dbReference type="EMBL" id="AK074022">
    <property type="protein sequence ID" value="BAG93767.1"/>
    <property type="molecule type" value="mRNA"/>
</dbReference>
<dbReference type="RefSeq" id="XP_015612383.1">
    <property type="nucleotide sequence ID" value="XM_015756897.1"/>
</dbReference>
<dbReference type="SMR" id="Q6K431"/>
<dbReference type="FunCoup" id="Q6K431">
    <property type="interactions" value="366"/>
</dbReference>
<dbReference type="STRING" id="39947.Q6K431"/>
<dbReference type="PaxDb" id="39947-Q6K431"/>
<dbReference type="EnsemblPlants" id="Os09t0134500-02">
    <molecule id="Q6K431-1"/>
    <property type="protein sequence ID" value="Os09t0134500-02"/>
    <property type="gene ID" value="Os09g0134500"/>
</dbReference>
<dbReference type="Gramene" id="Os09t0134500-02">
    <molecule id="Q6K431-1"/>
    <property type="protein sequence ID" value="Os09t0134500-02"/>
    <property type="gene ID" value="Os09g0134500"/>
</dbReference>
<dbReference type="KEGG" id="dosa:Os09g0134500"/>
<dbReference type="eggNOG" id="KOG1080">
    <property type="taxonomic scope" value="Eukaryota"/>
</dbReference>
<dbReference type="HOGENOM" id="CLU_005729_0_0_1"/>
<dbReference type="InParanoid" id="Q6K431"/>
<dbReference type="OMA" id="PYIVSGF"/>
<dbReference type="OrthoDB" id="308383at2759"/>
<dbReference type="Proteomes" id="UP000000763">
    <property type="component" value="Chromosome 9"/>
</dbReference>
<dbReference type="Proteomes" id="UP000059680">
    <property type="component" value="Chromosome 9"/>
</dbReference>
<dbReference type="GO" id="GO:0000785">
    <property type="term" value="C:chromatin"/>
    <property type="evidence" value="ECO:0000318"/>
    <property type="project" value="GO_Central"/>
</dbReference>
<dbReference type="GO" id="GO:0005634">
    <property type="term" value="C:nucleus"/>
    <property type="evidence" value="ECO:0007669"/>
    <property type="project" value="UniProtKB-SubCell"/>
</dbReference>
<dbReference type="GO" id="GO:0140945">
    <property type="term" value="F:histone H3K4 monomethyltransferase activity"/>
    <property type="evidence" value="ECO:0007669"/>
    <property type="project" value="RHEA"/>
</dbReference>
<dbReference type="GO" id="GO:0042054">
    <property type="term" value="F:histone methyltransferase activity"/>
    <property type="evidence" value="ECO:0000314"/>
    <property type="project" value="UniProtKB"/>
</dbReference>
<dbReference type="GO" id="GO:0008270">
    <property type="term" value="F:zinc ion binding"/>
    <property type="evidence" value="ECO:0007669"/>
    <property type="project" value="UniProtKB-KW"/>
</dbReference>
<dbReference type="GO" id="GO:0009908">
    <property type="term" value="P:flower development"/>
    <property type="evidence" value="ECO:0007669"/>
    <property type="project" value="UniProtKB-KW"/>
</dbReference>
<dbReference type="GO" id="GO:0032259">
    <property type="term" value="P:methylation"/>
    <property type="evidence" value="ECO:0007669"/>
    <property type="project" value="UniProtKB-KW"/>
</dbReference>
<dbReference type="GO" id="GO:0048578">
    <property type="term" value="P:positive regulation of long-day photoperiodism, flowering"/>
    <property type="evidence" value="ECO:0000315"/>
    <property type="project" value="UniProtKB"/>
</dbReference>
<dbReference type="GO" id="GO:0006357">
    <property type="term" value="P:regulation of transcription by RNA polymerase II"/>
    <property type="evidence" value="ECO:0000318"/>
    <property type="project" value="GO_Central"/>
</dbReference>
<dbReference type="CDD" id="cd15662">
    <property type="entry name" value="ePHD_ATX1_2_like"/>
    <property type="match status" value="1"/>
</dbReference>
<dbReference type="CDD" id="cd15494">
    <property type="entry name" value="PHD_ATX1_2_like"/>
    <property type="match status" value="1"/>
</dbReference>
<dbReference type="CDD" id="cd20142">
    <property type="entry name" value="PWWP_AtATX1-like"/>
    <property type="match status" value="1"/>
</dbReference>
<dbReference type="CDD" id="cd10518">
    <property type="entry name" value="SET_SETD1-like"/>
    <property type="match status" value="1"/>
</dbReference>
<dbReference type="CDD" id="cd20404">
    <property type="entry name" value="Tudor_Agenet_AtEML-like"/>
    <property type="match status" value="1"/>
</dbReference>
<dbReference type="FunFam" id="2.170.270.10:FF:000040">
    <property type="entry name" value="Histone-lysine N-methyltransferase"/>
    <property type="match status" value="1"/>
</dbReference>
<dbReference type="FunFam" id="2.30.30.140:FF:000094">
    <property type="entry name" value="Histone-lysine N-methyltransferase"/>
    <property type="match status" value="1"/>
</dbReference>
<dbReference type="FunFam" id="2.30.30.140:FF:000109">
    <property type="entry name" value="Histone-lysine N-methyltransferase"/>
    <property type="match status" value="1"/>
</dbReference>
<dbReference type="FunFam" id="3.30.40.10:FF:000293">
    <property type="entry name" value="Histone-lysine N-methyltransferase"/>
    <property type="match status" value="1"/>
</dbReference>
<dbReference type="FunFam" id="3.30.40.10:FF:000299">
    <property type="entry name" value="Histone-lysine N-methyltransferase"/>
    <property type="match status" value="1"/>
</dbReference>
<dbReference type="Gene3D" id="2.30.30.140">
    <property type="match status" value="2"/>
</dbReference>
<dbReference type="Gene3D" id="3.30.160.360">
    <property type="match status" value="1"/>
</dbReference>
<dbReference type="Gene3D" id="2.170.270.10">
    <property type="entry name" value="SET domain"/>
    <property type="match status" value="1"/>
</dbReference>
<dbReference type="Gene3D" id="3.30.40.10">
    <property type="entry name" value="Zinc/RING finger domain, C3HC4 (zinc finger)"/>
    <property type="match status" value="2"/>
</dbReference>
<dbReference type="InterPro" id="IPR041956">
    <property type="entry name" value="ATX1/2_ePHD"/>
</dbReference>
<dbReference type="InterPro" id="IPR042010">
    <property type="entry name" value="ATX1/2_PHD"/>
</dbReference>
<dbReference type="InterPro" id="IPR034732">
    <property type="entry name" value="EPHD"/>
</dbReference>
<dbReference type="InterPro" id="IPR003889">
    <property type="entry name" value="FYrich_C"/>
</dbReference>
<dbReference type="InterPro" id="IPR003888">
    <property type="entry name" value="FYrich_N"/>
</dbReference>
<dbReference type="InterPro" id="IPR050701">
    <property type="entry name" value="Histone_Mod_Regulator"/>
</dbReference>
<dbReference type="InterPro" id="IPR002219">
    <property type="entry name" value="PE/DAG-bd"/>
</dbReference>
<dbReference type="InterPro" id="IPR003616">
    <property type="entry name" value="Post-SET_dom"/>
</dbReference>
<dbReference type="InterPro" id="IPR000313">
    <property type="entry name" value="PWWP_dom"/>
</dbReference>
<dbReference type="InterPro" id="IPR001214">
    <property type="entry name" value="SET_dom"/>
</dbReference>
<dbReference type="InterPro" id="IPR046341">
    <property type="entry name" value="SET_dom_sf"/>
</dbReference>
<dbReference type="InterPro" id="IPR002999">
    <property type="entry name" value="Tudor"/>
</dbReference>
<dbReference type="InterPro" id="IPR019786">
    <property type="entry name" value="Zinc_finger_PHD-type_CS"/>
</dbReference>
<dbReference type="InterPro" id="IPR011011">
    <property type="entry name" value="Znf_FYVE_PHD"/>
</dbReference>
<dbReference type="InterPro" id="IPR001965">
    <property type="entry name" value="Znf_PHD"/>
</dbReference>
<dbReference type="InterPro" id="IPR019787">
    <property type="entry name" value="Znf_PHD-finger"/>
</dbReference>
<dbReference type="InterPro" id="IPR013083">
    <property type="entry name" value="Znf_RING/FYVE/PHD"/>
</dbReference>
<dbReference type="PANTHER" id="PTHR13793:SF140">
    <property type="entry name" value="HISTONE-LYSINE N-METHYLTRANSFERASE ATX2"/>
    <property type="match status" value="1"/>
</dbReference>
<dbReference type="PANTHER" id="PTHR13793">
    <property type="entry name" value="PHD FINGER PROTEINS"/>
    <property type="match status" value="1"/>
</dbReference>
<dbReference type="Pfam" id="PF05965">
    <property type="entry name" value="FYRC"/>
    <property type="match status" value="1"/>
</dbReference>
<dbReference type="Pfam" id="PF05964">
    <property type="entry name" value="FYRN"/>
    <property type="match status" value="1"/>
</dbReference>
<dbReference type="Pfam" id="PF13831">
    <property type="entry name" value="PHD_2"/>
    <property type="match status" value="1"/>
</dbReference>
<dbReference type="Pfam" id="PF00855">
    <property type="entry name" value="PWWP"/>
    <property type="match status" value="1"/>
</dbReference>
<dbReference type="Pfam" id="PF00856">
    <property type="entry name" value="SET"/>
    <property type="match status" value="1"/>
</dbReference>
<dbReference type="Pfam" id="PF13832">
    <property type="entry name" value="zf-HC5HC2H_2"/>
    <property type="match status" value="1"/>
</dbReference>
<dbReference type="SMART" id="SM00542">
    <property type="entry name" value="FYRC"/>
    <property type="match status" value="1"/>
</dbReference>
<dbReference type="SMART" id="SM00541">
    <property type="entry name" value="FYRN"/>
    <property type="match status" value="1"/>
</dbReference>
<dbReference type="SMART" id="SM00249">
    <property type="entry name" value="PHD"/>
    <property type="match status" value="2"/>
</dbReference>
<dbReference type="SMART" id="SM00508">
    <property type="entry name" value="PostSET"/>
    <property type="match status" value="1"/>
</dbReference>
<dbReference type="SMART" id="SM00293">
    <property type="entry name" value="PWWP"/>
    <property type="match status" value="1"/>
</dbReference>
<dbReference type="SMART" id="SM00317">
    <property type="entry name" value="SET"/>
    <property type="match status" value="1"/>
</dbReference>
<dbReference type="SMART" id="SM00333">
    <property type="entry name" value="TUDOR"/>
    <property type="match status" value="1"/>
</dbReference>
<dbReference type="SUPFAM" id="SSF57903">
    <property type="entry name" value="FYVE/PHD zinc finger"/>
    <property type="match status" value="1"/>
</dbReference>
<dbReference type="SUPFAM" id="SSF82199">
    <property type="entry name" value="SET domain"/>
    <property type="match status" value="1"/>
</dbReference>
<dbReference type="SUPFAM" id="SSF63748">
    <property type="entry name" value="Tudor/PWWP/MBT"/>
    <property type="match status" value="2"/>
</dbReference>
<dbReference type="PROSITE" id="PS51805">
    <property type="entry name" value="EPHD"/>
    <property type="match status" value="1"/>
</dbReference>
<dbReference type="PROSITE" id="PS51543">
    <property type="entry name" value="FYRC"/>
    <property type="match status" value="1"/>
</dbReference>
<dbReference type="PROSITE" id="PS51542">
    <property type="entry name" value="FYRN"/>
    <property type="match status" value="1"/>
</dbReference>
<dbReference type="PROSITE" id="PS50868">
    <property type="entry name" value="POST_SET"/>
    <property type="match status" value="1"/>
</dbReference>
<dbReference type="PROSITE" id="PS50812">
    <property type="entry name" value="PWWP"/>
    <property type="match status" value="1"/>
</dbReference>
<dbReference type="PROSITE" id="PS50280">
    <property type="entry name" value="SET"/>
    <property type="match status" value="1"/>
</dbReference>
<dbReference type="PROSITE" id="PS50081">
    <property type="entry name" value="ZF_DAG_PE_2"/>
    <property type="match status" value="1"/>
</dbReference>
<dbReference type="PROSITE" id="PS01359">
    <property type="entry name" value="ZF_PHD_1"/>
    <property type="match status" value="1"/>
</dbReference>
<dbReference type="PROSITE" id="PS50016">
    <property type="entry name" value="ZF_PHD_2"/>
    <property type="match status" value="1"/>
</dbReference>
<comment type="function">
    <text evidence="1 11">Possesses histone H3 methyltransferase activity in vitro (PubMed:24420930). Methylates 'Lys-4' of histone H3. H3 'Lys-4' methylation represents a specific tag for epigenetic transcriptional activation. Functions as a receptor for the lipid messenger phosphatidylinositol 5-phosphate (PI5P), which negatively regulates its transcriptional activation activity (By similarity). Involved in the regulation of flowering time and floral induction under long day (LD) conditions. Acts as an activator of flowering under LD conditions. May function through binding to EHD3, a repressor of GHD7 (PubMed:24420930).</text>
</comment>
<comment type="catalytic activity">
    <reaction evidence="11">
        <text>L-lysyl(4)-[histone H3] + S-adenosyl-L-methionine = N(6)-methyl-L-lysyl(4)-[histone H3] + S-adenosyl-L-homocysteine + H(+)</text>
        <dbReference type="Rhea" id="RHEA:60264"/>
        <dbReference type="Rhea" id="RHEA-COMP:15543"/>
        <dbReference type="Rhea" id="RHEA-COMP:15547"/>
        <dbReference type="ChEBI" id="CHEBI:15378"/>
        <dbReference type="ChEBI" id="CHEBI:29969"/>
        <dbReference type="ChEBI" id="CHEBI:57856"/>
        <dbReference type="ChEBI" id="CHEBI:59789"/>
        <dbReference type="ChEBI" id="CHEBI:61929"/>
        <dbReference type="EC" id="2.1.1.364"/>
    </reaction>
</comment>
<comment type="subunit">
    <text evidence="11">Interacts with EHD3.</text>
</comment>
<comment type="subcellular location">
    <subcellularLocation>
        <location evidence="11">Nucleus</location>
    </subcellularLocation>
</comment>
<comment type="alternative products">
    <event type="alternative splicing"/>
    <isoform>
        <id>Q6K431-1</id>
        <name>1</name>
        <sequence type="displayed"/>
    </isoform>
    <isoform>
        <id>Q6K431-2</id>
        <name>2</name>
        <sequence type="described" ref="VSP_058520 VSP_058521"/>
    </isoform>
</comment>
<comment type="tissue specificity">
    <text evidence="11">Expressed in leaf blades and panicles.</text>
</comment>
<comment type="disruption phenotype">
    <text evidence="11">Late-flowering phenotype under long day (LD) conditions.</text>
</comment>
<comment type="similarity">
    <text evidence="5">Belongs to the class V-like SAM-binding methyltransferase superfamily. Histone-lysine methyltransferase family. TRX/MLL subfamily.</text>
</comment>